<accession>B8GKC9</accession>
<comment type="catalytic activity">
    <reaction evidence="1">
        <text>1-(5-phospho-beta-D-ribosyl)-ATP + H2O = 1-(5-phospho-beta-D-ribosyl)-5'-AMP + diphosphate + H(+)</text>
        <dbReference type="Rhea" id="RHEA:22828"/>
        <dbReference type="ChEBI" id="CHEBI:15377"/>
        <dbReference type="ChEBI" id="CHEBI:15378"/>
        <dbReference type="ChEBI" id="CHEBI:33019"/>
        <dbReference type="ChEBI" id="CHEBI:59457"/>
        <dbReference type="ChEBI" id="CHEBI:73183"/>
        <dbReference type="EC" id="3.6.1.31"/>
    </reaction>
</comment>
<comment type="pathway">
    <text evidence="1">Amino-acid biosynthesis; L-histidine biosynthesis; L-histidine from 5-phospho-alpha-D-ribose 1-diphosphate: step 2/9.</text>
</comment>
<comment type="subcellular location">
    <subcellularLocation>
        <location evidence="1">Cytoplasm</location>
    </subcellularLocation>
</comment>
<comment type="similarity">
    <text evidence="1">Belongs to the PRA-PH family.</text>
</comment>
<organism>
    <name type="scientific">Methanosphaerula palustris (strain ATCC BAA-1556 / DSM 19958 / E1-9c)</name>
    <dbReference type="NCBI Taxonomy" id="521011"/>
    <lineage>
        <taxon>Archaea</taxon>
        <taxon>Methanobacteriati</taxon>
        <taxon>Methanobacteriota</taxon>
        <taxon>Stenosarchaea group</taxon>
        <taxon>Methanomicrobia</taxon>
        <taxon>Methanomicrobiales</taxon>
        <taxon>Methanoregulaceae</taxon>
        <taxon>Methanosphaerula</taxon>
    </lineage>
</organism>
<name>HIS2_METPE</name>
<gene>
    <name evidence="1" type="primary">hisE</name>
    <name type="ordered locus">Mpal_0438</name>
</gene>
<feature type="chain" id="PRO_1000149055" description="Phosphoribosyl-ATP pyrophosphatase">
    <location>
        <begin position="1"/>
        <end position="99"/>
    </location>
</feature>
<evidence type="ECO:0000255" key="1">
    <source>
        <dbReference type="HAMAP-Rule" id="MF_01020"/>
    </source>
</evidence>
<keyword id="KW-0028">Amino-acid biosynthesis</keyword>
<keyword id="KW-0067">ATP-binding</keyword>
<keyword id="KW-0963">Cytoplasm</keyword>
<keyword id="KW-0368">Histidine biosynthesis</keyword>
<keyword id="KW-0378">Hydrolase</keyword>
<keyword id="KW-0547">Nucleotide-binding</keyword>
<keyword id="KW-1185">Reference proteome</keyword>
<proteinExistence type="inferred from homology"/>
<protein>
    <recommendedName>
        <fullName evidence="1">Phosphoribosyl-ATP pyrophosphatase</fullName>
        <shortName evidence="1">PRA-PH</shortName>
        <ecNumber evidence="1">3.6.1.31</ecNumber>
    </recommendedName>
</protein>
<dbReference type="EC" id="3.6.1.31" evidence="1"/>
<dbReference type="EMBL" id="CP001338">
    <property type="protein sequence ID" value="ACL15812.1"/>
    <property type="molecule type" value="Genomic_DNA"/>
</dbReference>
<dbReference type="RefSeq" id="WP_012617131.1">
    <property type="nucleotide sequence ID" value="NC_011832.1"/>
</dbReference>
<dbReference type="SMR" id="B8GKC9"/>
<dbReference type="STRING" id="521011.Mpal_0438"/>
<dbReference type="GeneID" id="7271464"/>
<dbReference type="KEGG" id="mpl:Mpal_0438"/>
<dbReference type="eggNOG" id="arCOG02677">
    <property type="taxonomic scope" value="Archaea"/>
</dbReference>
<dbReference type="HOGENOM" id="CLU_123337_0_0_2"/>
<dbReference type="OrthoDB" id="39686at2157"/>
<dbReference type="UniPathway" id="UPA00031">
    <property type="reaction ID" value="UER00007"/>
</dbReference>
<dbReference type="Proteomes" id="UP000002457">
    <property type="component" value="Chromosome"/>
</dbReference>
<dbReference type="GO" id="GO:0005737">
    <property type="term" value="C:cytoplasm"/>
    <property type="evidence" value="ECO:0007669"/>
    <property type="project" value="UniProtKB-SubCell"/>
</dbReference>
<dbReference type="GO" id="GO:0005524">
    <property type="term" value="F:ATP binding"/>
    <property type="evidence" value="ECO:0007669"/>
    <property type="project" value="UniProtKB-KW"/>
</dbReference>
<dbReference type="GO" id="GO:0004636">
    <property type="term" value="F:phosphoribosyl-ATP diphosphatase activity"/>
    <property type="evidence" value="ECO:0007669"/>
    <property type="project" value="UniProtKB-UniRule"/>
</dbReference>
<dbReference type="GO" id="GO:0000105">
    <property type="term" value="P:L-histidine biosynthetic process"/>
    <property type="evidence" value="ECO:0007669"/>
    <property type="project" value="UniProtKB-UniRule"/>
</dbReference>
<dbReference type="CDD" id="cd11534">
    <property type="entry name" value="NTP-PPase_HisIE_like"/>
    <property type="match status" value="1"/>
</dbReference>
<dbReference type="Gene3D" id="1.10.287.1080">
    <property type="entry name" value="MazG-like"/>
    <property type="match status" value="1"/>
</dbReference>
<dbReference type="HAMAP" id="MF_01020">
    <property type="entry name" value="HisE"/>
    <property type="match status" value="1"/>
</dbReference>
<dbReference type="InterPro" id="IPR008179">
    <property type="entry name" value="HisE"/>
</dbReference>
<dbReference type="InterPro" id="IPR021130">
    <property type="entry name" value="PRib-ATP_PPHydrolase-like"/>
</dbReference>
<dbReference type="NCBIfam" id="TIGR03188">
    <property type="entry name" value="histidine_hisI"/>
    <property type="match status" value="1"/>
</dbReference>
<dbReference type="PANTHER" id="PTHR42945">
    <property type="entry name" value="HISTIDINE BIOSYNTHESIS BIFUNCTIONAL PROTEIN"/>
    <property type="match status" value="1"/>
</dbReference>
<dbReference type="PANTHER" id="PTHR42945:SF1">
    <property type="entry name" value="HISTIDINE BIOSYNTHESIS BIFUNCTIONAL PROTEIN HIS7"/>
    <property type="match status" value="1"/>
</dbReference>
<dbReference type="Pfam" id="PF01503">
    <property type="entry name" value="PRA-PH"/>
    <property type="match status" value="1"/>
</dbReference>
<dbReference type="SUPFAM" id="SSF101386">
    <property type="entry name" value="all-alpha NTP pyrophosphatases"/>
    <property type="match status" value="1"/>
</dbReference>
<sequence>MTDTALIAELWDVIVDRRLHPVEGSYVNSLLSHRKGIDKPLEKVGEEATEFILAVKNGESDRIAEEAADLLFHMLVALNAADVDLSLVLDELASRRRSR</sequence>
<reference key="1">
    <citation type="journal article" date="2015" name="Genome Announc.">
        <title>Complete Genome Sequence of Methanosphaerula palustris E1-9CT, a Hydrogenotrophic Methanogen Isolated from a Minerotrophic Fen Peatland.</title>
        <authorList>
            <person name="Cadillo-Quiroz H."/>
            <person name="Browne P."/>
            <person name="Kyrpides N."/>
            <person name="Woyke T."/>
            <person name="Goodwin L."/>
            <person name="Detter C."/>
            <person name="Yavitt J.B."/>
            <person name="Zinder S.H."/>
        </authorList>
    </citation>
    <scope>NUCLEOTIDE SEQUENCE [LARGE SCALE GENOMIC DNA]</scope>
    <source>
        <strain>ATCC BAA-1556 / DSM 19958 / E1-9c</strain>
    </source>
</reference>